<comment type="function">
    <text evidence="2 12">Receptor for TNFSF11/RANKL/TRANCE/OPGL; essential for RANKL-mediated osteoclastogenesis (PubMed:9878548). Its interaction with EEIG1 promotes osteoclastogenesis via facilitating the transcription of NFATC1 and activation of PLCG2 (By similarity). Involved in the regulation of interactions between T-cells and dendritic cells (By similarity).</text>
</comment>
<comment type="subunit">
    <text evidence="2 7 9 11">Binds to the clefts between the subunits of the TNFSF11 ligand trimer to form a heterohexamer (By similarity). Part of a complex composed of EEIG1, TNFRSF11A/RANK, PLCG2, GAB2, TEC and BTK; complex formation increases in the presence of TNFSF11/RANKL (PubMed:23478294). Interacts with TRAF1, TRAF2, TRAF3, TRAF5 and TRAF6 (PubMed:9774460). Interacts (via cytoplasmic domain) with GAB2 (PubMed:15750601). Interacts (via cytoplasmic domain); with EEIG1 (via N-terminus); when in the presence of TNFSF11/RANKL (By similarity).</text>
</comment>
<comment type="interaction">
    <interactant intactId="EBI-525675">
        <id>Q9Y6Q6</id>
    </interactant>
    <interactant intactId="EBI-15488409">
        <id>PRO_0000034515</id>
        <label>TNFSF11</label>
        <dbReference type="UniProtKB" id="O14788"/>
    </interactant>
    <organismsDiffer>false</organismsDiffer>
    <experiments>9</experiments>
</comment>
<comment type="interaction">
    <interactant intactId="EBI-525675">
        <id>Q9Y6Q6</id>
    </interactant>
    <interactant intactId="EBI-355744">
        <id>Q12933</id>
        <label>TRAF2</label>
    </interactant>
    <organismsDiffer>false</organismsDiffer>
    <experiments>2</experiments>
</comment>
<comment type="interaction">
    <interactant intactId="EBI-20899422">
        <id>Q9Y6Q6-2</id>
    </interactant>
    <interactant intactId="EBI-297353">
        <id>P00533</id>
        <label>EGFR</label>
    </interactant>
    <organismsDiffer>false</organismsDiffer>
    <experiments>3</experiments>
</comment>
<comment type="interaction">
    <interactant intactId="EBI-20899422">
        <id>Q9Y6Q6-2</id>
    </interactant>
    <interactant intactId="EBI-355744">
        <id>Q12933</id>
        <label>TRAF2</label>
    </interactant>
    <organismsDiffer>false</organismsDiffer>
    <experiments>5</experiments>
</comment>
<comment type="subcellular location">
    <molecule>Isoform 1</molecule>
    <subcellularLocation>
        <location evidence="10">Cell membrane</location>
        <topology evidence="10">Single-pass type I membrane protein</topology>
    </subcellularLocation>
    <subcellularLocation>
        <location evidence="2">Membrane raft</location>
    </subcellularLocation>
</comment>
<comment type="subcellular location">
    <molecule>Isoform RANK-e5a</molecule>
    <subcellularLocation>
        <location evidence="10">Cell membrane</location>
        <topology evidence="10">Single-pass type I membrane protein</topology>
    </subcellularLocation>
</comment>
<comment type="alternative products">
    <event type="alternative splicing"/>
    <isoform>
        <id>Q9Y6Q6-1</id>
        <name>1</name>
        <sequence type="displayed"/>
    </isoform>
    <isoform>
        <id>Q9Y6Q6-2</id>
        <name>2</name>
        <name>delta7,8,9</name>
        <sequence type="described" ref="VSP_046901"/>
    </isoform>
    <isoform>
        <id>Q9Y6Q6-3</id>
        <name>3</name>
        <name>delta8,9</name>
        <sequence type="described" ref="VSP_054180"/>
    </isoform>
    <isoform>
        <id>Q9Y6Q6-4</id>
        <name>4</name>
        <name>delta9</name>
        <sequence type="described" ref="VSP_054181 VSP_054182"/>
    </isoform>
    <isoform>
        <id>Q9Y6Q6-5</id>
        <name>5</name>
        <name>exon9a</name>
        <sequence type="described" ref="VSP_054183"/>
    </isoform>
    <isoform>
        <id>Q9Y6Q6-6</id>
        <name>RANK-e5a</name>
        <sequence type="described" ref="VSP_054179"/>
    </isoform>
</comment>
<comment type="tissue specificity">
    <text>Ubiquitous expression with high levels in skeletal muscle, thymus, liver, colon, small intestine and adrenal gland.</text>
</comment>
<comment type="disease" evidence="6">
    <disease id="DI-01568">
        <name>Familial expansile osteolysis</name>
        <acronym>FEO</acronym>
        <description>Rare autosomal dominant bone disorder characterized by focal areas of increased bone remodeling. The osteolytic lesions develop usually in the long bones during early adulthood. FEO is often associated with early-onset deafness and loss of dentition.</description>
        <dbReference type="MIM" id="174810"/>
    </disease>
    <text>The disease is caused by variants affecting the gene represented in this entry.</text>
</comment>
<comment type="disease" evidence="6">
    <disease id="DI-02120">
        <name>Paget disease of bone 2, early-onset</name>
        <acronym>PDB2</acronym>
        <description>A form of Paget disease, a disorder of bone remodeling characterized by increased bone turnover affecting one or more sites throughout the skeleton, primarily the axial skeleton. Osteoclastic overactivity followed by compensatory osteoblastic activity leads to a structurally disorganized mosaic of bone (woven bone), which is mechanically weaker, larger, less compact, more vascular, and more susceptible to fracture than normal adult lamellar bone.</description>
        <dbReference type="MIM" id="602080"/>
    </disease>
    <text>The disease is caused by variants affecting the gene represented in this entry.</text>
</comment>
<comment type="disease" evidence="8">
    <disease id="DI-00890">
        <name>Osteopetrosis, autosomal recessive 7</name>
        <acronym>OPTB7</acronym>
        <description>A rare genetic disease characterized by abnormally dense bone, due to defective resorption of immature bone. Osteopetrosis occurs in two forms: a severe autosomal recessive form occurring in utero, infancy, or childhood, and a benign autosomal dominant form occurring in adolescence or adulthood. Recessive osteopetrosis commonly manifests in early infancy with macrocephaly, feeding difficulties, evolving blindness and deafness, bone marrow failure, severe anemia, and hepatosplenomegaly. Deafness and blindness are generally thought to represent effects of pressure on nerves. OPTB7 is characterized by paucity of osteoclasts, suggesting a molecular defect in osteoclast development. OPTB7 is associated with hypogammaglobulinemia.</description>
        <dbReference type="MIM" id="612301"/>
    </disease>
    <text>The disease is caused by variants affecting the gene represented in this entry.</text>
</comment>
<comment type="miscellaneous">
    <molecule>Isoform RANK-e5a</molecule>
    <text evidence="16">Reduced ability to bind RANKL and to activate NF-kappaB as compared to isoform 1.</text>
</comment>
<comment type="sequence caution" evidence="16">
    <conflict type="erroneous initiation">
        <sequence resource="EMBL-CDS" id="BAD92999"/>
    </conflict>
    <text>Extended N-terminus.</text>
</comment>
<name>TNR11_HUMAN</name>
<organism>
    <name type="scientific">Homo sapiens</name>
    <name type="common">Human</name>
    <dbReference type="NCBI Taxonomy" id="9606"/>
    <lineage>
        <taxon>Eukaryota</taxon>
        <taxon>Metazoa</taxon>
        <taxon>Chordata</taxon>
        <taxon>Craniata</taxon>
        <taxon>Vertebrata</taxon>
        <taxon>Euteleostomi</taxon>
        <taxon>Mammalia</taxon>
        <taxon>Eutheria</taxon>
        <taxon>Euarchontoglires</taxon>
        <taxon>Primates</taxon>
        <taxon>Haplorrhini</taxon>
        <taxon>Catarrhini</taxon>
        <taxon>Hominidae</taxon>
        <taxon>Homo</taxon>
    </lineage>
</organism>
<protein>
    <recommendedName>
        <fullName>Tumor necrosis factor receptor superfamily member 11A</fullName>
    </recommendedName>
    <alternativeName>
        <fullName>Osteoclast differentiation factor receptor</fullName>
        <shortName>ODFR</shortName>
    </alternativeName>
    <alternativeName>
        <fullName>Receptor activator of NF-KB</fullName>
    </alternativeName>
    <cdAntigenName>CD265</cdAntigenName>
</protein>
<gene>
    <name type="primary">TNFRSF11A</name>
    <name type="synonym">RANK</name>
</gene>
<feature type="signal peptide" evidence="3">
    <location>
        <begin position="1"/>
        <end position="29"/>
    </location>
</feature>
<feature type="chain" id="PRO_0000034585" description="Tumor necrosis factor receptor superfamily member 11A">
    <location>
        <begin position="30"/>
        <end position="616"/>
    </location>
</feature>
<feature type="topological domain" description="Extracellular" evidence="3">
    <location>
        <begin position="30"/>
        <end position="212"/>
    </location>
</feature>
<feature type="transmembrane region" description="Helical" evidence="3">
    <location>
        <begin position="213"/>
        <end position="233"/>
    </location>
</feature>
<feature type="topological domain" description="Cytoplasmic" evidence="3">
    <location>
        <begin position="234"/>
        <end position="616"/>
    </location>
</feature>
<feature type="repeat" description="TNFR-Cys 1">
    <location>
        <begin position="34"/>
        <end position="68"/>
    </location>
</feature>
<feature type="repeat" description="TNFR-Cys 2">
    <location>
        <begin position="71"/>
        <end position="112"/>
    </location>
</feature>
<feature type="repeat" description="TNFR-Cys 3">
    <location>
        <begin position="114"/>
        <end position="151"/>
    </location>
</feature>
<feature type="repeat" description="TNFR-Cys 4">
    <location>
        <begin position="154"/>
        <end position="194"/>
    </location>
</feature>
<feature type="region of interest" description="Disordered" evidence="5">
    <location>
        <begin position="468"/>
        <end position="536"/>
    </location>
</feature>
<feature type="region of interest" description="Required for interaction with EEIG1 and osteoclast differentiation" evidence="2">
    <location>
        <begin position="544"/>
        <end position="549"/>
    </location>
</feature>
<feature type="region of interest" description="Disordered" evidence="5">
    <location>
        <begin position="556"/>
        <end position="616"/>
    </location>
</feature>
<feature type="compositionally biased region" description="Basic and acidic residues" evidence="5">
    <location>
        <begin position="483"/>
        <end position="493"/>
    </location>
</feature>
<feature type="compositionally biased region" description="Low complexity" evidence="5">
    <location>
        <begin position="499"/>
        <end position="508"/>
    </location>
</feature>
<feature type="compositionally biased region" description="Polar residues" evidence="5">
    <location>
        <begin position="524"/>
        <end position="536"/>
    </location>
</feature>
<feature type="compositionally biased region" description="Basic and acidic residues" evidence="5">
    <location>
        <begin position="570"/>
        <end position="580"/>
    </location>
</feature>
<feature type="binding site" evidence="1">
    <location>
        <position position="133"/>
    </location>
    <ligand>
        <name>Na(+)</name>
        <dbReference type="ChEBI" id="CHEBI:29101"/>
    </ligand>
</feature>
<feature type="binding site" evidence="1">
    <location>
        <position position="134"/>
    </location>
    <ligand>
        <name>Na(+)</name>
        <dbReference type="ChEBI" id="CHEBI:29101"/>
    </ligand>
</feature>
<feature type="binding site" evidence="1">
    <location>
        <position position="160"/>
    </location>
    <ligand>
        <name>Na(+)</name>
        <dbReference type="ChEBI" id="CHEBI:29101"/>
    </ligand>
</feature>
<feature type="modified residue" description="Phosphoserine" evidence="17">
    <location>
        <position position="580"/>
    </location>
</feature>
<feature type="glycosylation site" description="N-linked (GlcNAc...) asparagine" evidence="3">
    <location>
        <position position="105"/>
    </location>
</feature>
<feature type="glycosylation site" description="N-linked (GlcNAc...) asparagine" evidence="3">
    <location>
        <position position="174"/>
    </location>
</feature>
<feature type="disulfide bond" evidence="4">
    <location>
        <begin position="34"/>
        <end position="46"/>
    </location>
</feature>
<feature type="disulfide bond" evidence="4">
    <location>
        <begin position="47"/>
        <end position="60"/>
    </location>
</feature>
<feature type="disulfide bond" evidence="4">
    <location>
        <begin position="50"/>
        <end position="68"/>
    </location>
</feature>
<feature type="disulfide bond" evidence="4">
    <location>
        <begin position="71"/>
        <end position="86"/>
    </location>
</feature>
<feature type="disulfide bond" evidence="4">
    <location>
        <begin position="92"/>
        <end position="112"/>
    </location>
</feature>
<feature type="disulfide bond" evidence="4">
    <location>
        <begin position="114"/>
        <end position="127"/>
    </location>
</feature>
<feature type="disulfide bond" evidence="4">
    <location>
        <begin position="124"/>
        <end position="126"/>
    </location>
</feature>
<feature type="disulfide bond" evidence="4">
    <location>
        <begin position="133"/>
        <end position="151"/>
    </location>
</feature>
<feature type="disulfide bond" evidence="4">
    <location>
        <begin position="154"/>
        <end position="169"/>
    </location>
</feature>
<feature type="disulfide bond" evidence="4">
    <location>
        <begin position="175"/>
        <end position="194"/>
    </location>
</feature>
<feature type="splice variant" id="VSP_054179" description="In isoform RANK-e5a." evidence="13">
    <original>LQLNKDTVCKPCLAG</original>
    <variation>C</variation>
    <location>
        <begin position="143"/>
        <end position="157"/>
    </location>
</feature>
<feature type="splice variant" id="VSP_046901" description="In isoform 2." evidence="14 15">
    <location>
        <begin position="206"/>
        <end position="522"/>
    </location>
</feature>
<feature type="splice variant" id="VSP_054180" description="In isoform 3." evidence="14">
    <location>
        <begin position="244"/>
        <end position="522"/>
    </location>
</feature>
<feature type="splice variant" id="VSP_054181" description="In isoform 4." evidence="14">
    <original>S</original>
    <variation>M</variation>
    <location>
        <position position="263"/>
    </location>
</feature>
<feature type="splice variant" id="VSP_054182" description="In isoform 4." evidence="14">
    <location>
        <begin position="264"/>
        <end position="616"/>
    </location>
</feature>
<feature type="splice variant" id="VSP_054183" description="In isoform 5." evidence="14">
    <original>GNVTGNSNSTFISSGQVMNFKGDIIVVYVSQTSQEGAAAAAEPMGRPVQEETLARRDSFAGNGPRFPDPCGGPEGLREPEKASRPVQEQGGAKA</original>
    <variation>D</variation>
    <location>
        <begin position="523"/>
        <end position="616"/>
    </location>
</feature>
<feature type="sequence variant" id="VAR_011516" description="In PDB2." evidence="6">
    <original>L</original>
    <variation>LALLLLCALL</variation>
    <location>
        <position position="21"/>
    </location>
</feature>
<feature type="sequence variant" id="VAR_011517" description="In FEO." evidence="6">
    <original>L</original>
    <variation>LLLCALL</variation>
    <location>
        <position position="21"/>
    </location>
</feature>
<feature type="sequence variant" id="VAR_046788" description="In OPTB7; two patients with osteoclast-poor osteopetrosis; dbSNP:rs121908659." evidence="8">
    <original>G</original>
    <variation>R</variation>
    <location>
        <position position="53"/>
    </location>
</feature>
<feature type="sequence variant" id="VAR_046789" description="In OPTB7; a patient with osteoclast-poor osteopetrosis; dbSNP:rs121908657." evidence="8">
    <original>R</original>
    <variation>C</variation>
    <location>
        <position position="129"/>
    </location>
</feature>
<feature type="sequence variant" id="VAR_046790" description="In dbSNP:rs35211496.">
    <original>H</original>
    <variation>Y</variation>
    <location>
        <position position="141"/>
    </location>
</feature>
<feature type="sequence variant" id="VAR_046791" description="In OPTB7; two siblings with osteoclast-poor osteopetrosis; dbSNP:rs121908655." evidence="8">
    <original>R</original>
    <variation>G</variation>
    <location>
        <position position="170"/>
    </location>
</feature>
<feature type="sequence variant" id="VAR_046792" description="In OPTB7; two patients with osteoclast-poor osteopetrosis; dbSNP:rs121908656." evidence="8">
    <original>C</original>
    <variation>R</variation>
    <location>
        <position position="175"/>
    </location>
</feature>
<feature type="sequence variant" id="VAR_011518" description="In dbSNP:rs1805034." evidence="6">
    <original>A</original>
    <variation>V</variation>
    <location>
        <position position="192"/>
    </location>
</feature>
<feature type="sequence variant" id="VAR_046793" description="In OPTB7; one patient with osteoclast-poor osteopetrosis; dbSNP:rs121908658." evidence="8">
    <original>A</original>
    <variation>S</variation>
    <location>
        <position position="244"/>
    </location>
</feature>
<feature type="strand" evidence="18">
    <location>
        <begin position="345"/>
        <end position="348"/>
    </location>
</feature>
<evidence type="ECO:0000250" key="1"/>
<evidence type="ECO:0000250" key="2">
    <source>
        <dbReference type="UniProtKB" id="O35305"/>
    </source>
</evidence>
<evidence type="ECO:0000255" key="3"/>
<evidence type="ECO:0000255" key="4">
    <source>
        <dbReference type="PROSITE-ProRule" id="PRU00206"/>
    </source>
</evidence>
<evidence type="ECO:0000256" key="5">
    <source>
        <dbReference type="SAM" id="MobiDB-lite"/>
    </source>
</evidence>
<evidence type="ECO:0000269" key="6">
    <source>
    </source>
</evidence>
<evidence type="ECO:0000269" key="7">
    <source>
    </source>
</evidence>
<evidence type="ECO:0000269" key="8">
    <source>
    </source>
</evidence>
<evidence type="ECO:0000269" key="9">
    <source>
    </source>
</evidence>
<evidence type="ECO:0000269" key="10">
    <source>
    </source>
</evidence>
<evidence type="ECO:0000269" key="11">
    <source>
    </source>
</evidence>
<evidence type="ECO:0000269" key="12">
    <source>
    </source>
</evidence>
<evidence type="ECO:0000303" key="13">
    <source>
    </source>
</evidence>
<evidence type="ECO:0000303" key="14">
    <source ref="3"/>
</evidence>
<evidence type="ECO:0000303" key="15">
    <source ref="4"/>
</evidence>
<evidence type="ECO:0000305" key="16"/>
<evidence type="ECO:0007744" key="17">
    <source>
    </source>
</evidence>
<evidence type="ECO:0007829" key="18">
    <source>
        <dbReference type="PDB" id="1LB5"/>
    </source>
</evidence>
<accession>Q9Y6Q6</accession>
<accession>I4EC36</accession>
<accession>I4EC38</accession>
<accession>I4EC39</accession>
<accession>I7JE63</accession>
<accession>N0GVH0</accession>
<accession>Q59EP9</accession>
<reference key="1">
    <citation type="journal article" date="1997" name="Nature">
        <title>A homologue of the TNF receptor and its ligand enhance T-cell growth and dendritic-cell function.</title>
        <authorList>
            <person name="Anderson D.M."/>
            <person name="Maraskovsky E."/>
            <person name="Billingsley W.L."/>
            <person name="Dougall W.C."/>
            <person name="Tometsko M.E."/>
            <person name="Roux E.R."/>
            <person name="Teepe M.C."/>
            <person name="DuBose R.F."/>
            <person name="Cosman D."/>
            <person name="Galibert L."/>
        </authorList>
    </citation>
    <scope>NUCLEOTIDE SEQUENCE [MRNA] (ISOFORM 1)</scope>
    <source>
        <tissue>Dendritic cell</tissue>
    </source>
</reference>
<reference key="2">
    <citation type="journal article" date="2013" name="Gene">
        <title>Alternative splicing generates a truncated isoform of human TNFRSF11A (RANK) with an altered capacity to activate NF-kappaB.</title>
        <authorList>
            <person name="Sirinian C."/>
            <person name="Papanastasiou A.D."/>
            <person name="Zarkadis I.K."/>
            <person name="Kalofonos H.P."/>
        </authorList>
    </citation>
    <scope>NUCLEOTIDE SEQUENCE [MRNA] (ISOFORM RANK-E5A)</scope>
    <scope>SUBCELLULAR LOCATION (ISOFORMS 1 AND RANK-E5A)</scope>
    <scope>ALTERNATIVE SPLICING</scope>
    <source>
        <tissue>Blood</tissue>
    </source>
</reference>
<reference key="3">
    <citation type="submission" date="2012-06" db="EMBL/GenBank/DDBJ databases">
        <title>Alternative splicing generates multiple human TNFRSF11A (RANK) isoforms.</title>
        <authorList>
            <person name="Papanastasiou A.D."/>
            <person name="Sirinian C."/>
            <person name="Kalofonos H.P."/>
        </authorList>
    </citation>
    <scope>NUCLEOTIDE SEQUENCE [MRNA] (ISOFORMS 2; 3 AND 4)</scope>
    <scope>NUCLEOTIDE SEQUENCE [MRNA] OF 159-523 (ISOFORM 5)</scope>
    <scope>ALTERNATIVE SPLICING</scope>
    <source>
        <tissue>Blood</tissue>
    </source>
</reference>
<reference key="4">
    <citation type="submission" date="2005-03" db="EMBL/GenBank/DDBJ databases">
        <title>Homo sapiens protein coding cDNA.</title>
        <authorList>
            <person name="Totoki Y."/>
            <person name="Toyoda A."/>
            <person name="Takeda T."/>
            <person name="Sakaki Y."/>
            <person name="Tanaka A."/>
            <person name="Yokoyama S."/>
            <person name="Ohara O."/>
            <person name="Nagase T."/>
            <person name="Kikuno R.F."/>
        </authorList>
    </citation>
    <scope>NUCLEOTIDE SEQUENCE [LARGE SCALE MRNA] (ISOFORM 2)</scope>
    <source>
        <tissue>Brain</tissue>
    </source>
</reference>
<reference key="5">
    <citation type="journal article" date="1998" name="Biochem. Biophys. Res. Commun.">
        <title>RANK is the essential signaling receptor for osteoclast differentiation factor in osteoclastogenesis.</title>
        <authorList>
            <person name="Nakagawa N."/>
            <person name="Kinosaki M."/>
            <person name="Yamaguchi K."/>
            <person name="Shima N."/>
            <person name="Yasuda H."/>
            <person name="Yano K."/>
            <person name="Morinaga T."/>
            <person name="Higashio K."/>
        </authorList>
    </citation>
    <scope>FUNCTION</scope>
</reference>
<reference key="6">
    <citation type="journal article" date="1998" name="J. Biol. Chem.">
        <title>The TRAF family of signal transducers mediates NF-kappaB activation by the TRANCE receptor.</title>
        <authorList>
            <person name="Wong B.R."/>
            <person name="Josien R."/>
            <person name="Lee S.Y."/>
            <person name="Vologodskaia M."/>
            <person name="Steinman R.M."/>
            <person name="Choi Y."/>
        </authorList>
    </citation>
    <scope>INTERACTION WITH TRAF1; TRAF2; TRAF3; TRAF5 AND TRAF6</scope>
</reference>
<reference key="7">
    <citation type="journal article" date="2005" name="Nat. Med.">
        <title>The molecular scaffold Gab2 is a crucial component of RANK signaling and osteoclastogenesis.</title>
        <authorList>
            <person name="Wada T."/>
            <person name="Nakashima T."/>
            <person name="Oliveira-dos-Santos A.J."/>
            <person name="Gasser J."/>
            <person name="Hara H."/>
            <person name="Schett G."/>
            <person name="Penninger J.M."/>
        </authorList>
    </citation>
    <scope>INTERACTION WITH GAB2</scope>
</reference>
<reference key="8">
    <citation type="journal article" date="2008" name="Proc. Natl. Acad. Sci. U.S.A.">
        <title>A quantitative atlas of mitotic phosphorylation.</title>
        <authorList>
            <person name="Dephoure N."/>
            <person name="Zhou C."/>
            <person name="Villen J."/>
            <person name="Beausoleil S.A."/>
            <person name="Bakalarski C.E."/>
            <person name="Elledge S.J."/>
            <person name="Gygi S.P."/>
        </authorList>
    </citation>
    <scope>IDENTIFICATION BY MASS SPECTROMETRY [LARGE SCALE ANALYSIS]</scope>
    <source>
        <tissue>Cervix carcinoma</tissue>
    </source>
</reference>
<reference key="9">
    <citation type="journal article" date="2013" name="Cell Res.">
        <title>Early estrogen-induced gene 1, a novel RANK signaling component, is essential for osteoclastogenesis.</title>
        <authorList>
            <person name="Choi H.K."/>
            <person name="Kang H.R."/>
            <person name="Jung E."/>
            <person name="Kim T.E."/>
            <person name="Lin J.J."/>
            <person name="Lee S.Y."/>
        </authorList>
    </citation>
    <scope>IDENTIFICATION IN A COMPLEX WITH EEIG1; PLCY2; GAB2; TEC AND BTK</scope>
</reference>
<reference key="10">
    <citation type="journal article" date="2013" name="J. Proteome Res.">
        <title>Toward a comprehensive characterization of a human cancer cell phosphoproteome.</title>
        <authorList>
            <person name="Zhou H."/>
            <person name="Di Palma S."/>
            <person name="Preisinger C."/>
            <person name="Peng M."/>
            <person name="Polat A.N."/>
            <person name="Heck A.J."/>
            <person name="Mohammed S."/>
        </authorList>
    </citation>
    <scope>PHOSPHORYLATION [LARGE SCALE ANALYSIS] AT SER-580</scope>
    <scope>IDENTIFICATION BY MASS SPECTROMETRY [LARGE SCALE ANALYSIS]</scope>
    <source>
        <tissue>Cervix carcinoma</tissue>
    </source>
</reference>
<reference key="11">
    <citation type="journal article" date="2000" name="Nat. Genet.">
        <title>Mutations in TNFRSF11A, affecting the signal peptide of RANK, cause familial expansile osteolysis.</title>
        <authorList>
            <person name="Hughes A.E."/>
            <person name="Ralston S.H."/>
            <person name="Marken J."/>
            <person name="Bell C."/>
            <person name="MacPherson H."/>
            <person name="Wallace R.G.H."/>
            <person name="van Hul W."/>
            <person name="Whyte M.P."/>
            <person name="Nakatsuka K."/>
            <person name="Hovy L."/>
            <person name="Anderson D.M."/>
        </authorList>
    </citation>
    <scope>VARIANT FEO LEU-LEU-CYS-ALA-LEU-LEU-21 INS</scope>
    <scope>VARIANT PDB2 ALA-LEU-LEU-LEU-LEU-CYS-ALA-LEU-LEU-21 INS</scope>
    <scope>VARIANT VAL-192</scope>
</reference>
<reference key="12">
    <citation type="journal article" date="2008" name="Am. J. Hum. Genet.">
        <title>Human osteoclast-poor osteopetrosis with hypogammaglobulinemia due to TNFRSF11A (RANK) mutations.</title>
        <authorList>
            <person name="Guerrini M.M."/>
            <person name="Sobacchi C."/>
            <person name="Cassani B."/>
            <person name="Abinun M."/>
            <person name="Kilic S.S."/>
            <person name="Pangrazio A."/>
            <person name="Moratto D."/>
            <person name="Mazzolari E."/>
            <person name="Clayton-Smith J."/>
            <person name="Orchard P."/>
            <person name="Coxon F.P."/>
            <person name="Helfrich M.H."/>
            <person name="Crockett J.C."/>
            <person name="Mellis D."/>
            <person name="Vellodi A."/>
            <person name="Tezcan I."/>
            <person name="Notarangelo L.D."/>
            <person name="Rogers M.J."/>
            <person name="Vezzoni P."/>
            <person name="Villa A."/>
            <person name="Frattini A."/>
        </authorList>
    </citation>
    <scope>VARIANTS OPTB7 ARG-53; CYS-129; GLY-170; ARG-175 AND SER-244</scope>
</reference>
<dbReference type="EMBL" id="AF018253">
    <property type="protein sequence ID" value="AAB86809.1"/>
    <property type="molecule type" value="mRNA"/>
</dbReference>
<dbReference type="EMBL" id="HF584702">
    <property type="protein sequence ID" value="CCQ44072.1"/>
    <property type="molecule type" value="mRNA"/>
</dbReference>
<dbReference type="EMBL" id="HE647782">
    <property type="protein sequence ID" value="CCF23032.1"/>
    <property type="molecule type" value="mRNA"/>
</dbReference>
<dbReference type="EMBL" id="HE649916">
    <property type="protein sequence ID" value="CCF55033.1"/>
    <property type="molecule type" value="mRNA"/>
</dbReference>
<dbReference type="EMBL" id="HE649917">
    <property type="protein sequence ID" value="CCF55034.1"/>
    <property type="molecule type" value="mRNA"/>
</dbReference>
<dbReference type="EMBL" id="HE659518">
    <property type="protein sequence ID" value="CCF77738.1"/>
    <property type="molecule type" value="mRNA"/>
</dbReference>
<dbReference type="EMBL" id="AB209762">
    <property type="protein sequence ID" value="BAD92999.1"/>
    <property type="status" value="ALT_INIT"/>
    <property type="molecule type" value="mRNA"/>
</dbReference>
<dbReference type="CCDS" id="CCDS11980.1">
    <molecule id="Q9Y6Q6-1"/>
</dbReference>
<dbReference type="CCDS" id="CCDS59324.1">
    <molecule id="Q9Y6Q6-2"/>
</dbReference>
<dbReference type="RefSeq" id="NP_001257878.1">
    <molecule id="Q9Y6Q6-4"/>
    <property type="nucleotide sequence ID" value="NM_001270949.2"/>
</dbReference>
<dbReference type="RefSeq" id="NP_001257879.1">
    <molecule id="Q9Y6Q6-3"/>
    <property type="nucleotide sequence ID" value="NM_001270950.2"/>
</dbReference>
<dbReference type="RefSeq" id="NP_001257880.1">
    <molecule id="Q9Y6Q6-2"/>
    <property type="nucleotide sequence ID" value="NM_001270951.2"/>
</dbReference>
<dbReference type="RefSeq" id="NP_001265197.1">
    <molecule id="Q9Y6Q6-6"/>
    <property type="nucleotide sequence ID" value="NM_001278268.2"/>
</dbReference>
<dbReference type="RefSeq" id="NP_003830.1">
    <molecule id="Q9Y6Q6-1"/>
    <property type="nucleotide sequence ID" value="NM_003839.4"/>
</dbReference>
<dbReference type="PDB" id="1LB5">
    <property type="method" value="X-ray"/>
    <property type="resolution" value="2.40 A"/>
    <property type="chains" value="B=342-349"/>
</dbReference>
<dbReference type="PDBsum" id="1LB5"/>
<dbReference type="SMR" id="Q9Y6Q6"/>
<dbReference type="BioGRID" id="114320">
    <property type="interactions" value="18"/>
</dbReference>
<dbReference type="CORUM" id="Q9Y6Q6"/>
<dbReference type="ELM" id="Q9Y6Q6"/>
<dbReference type="FunCoup" id="Q9Y6Q6">
    <property type="interactions" value="551"/>
</dbReference>
<dbReference type="IntAct" id="Q9Y6Q6">
    <property type="interactions" value="7"/>
</dbReference>
<dbReference type="MINT" id="Q9Y6Q6"/>
<dbReference type="STRING" id="9606.ENSP00000465500"/>
<dbReference type="DrugBank" id="DB05959">
    <property type="generic name" value="ENMD-1198"/>
</dbReference>
<dbReference type="GlyCosmos" id="Q9Y6Q6">
    <property type="glycosylation" value="2 sites, No reported glycans"/>
</dbReference>
<dbReference type="GlyGen" id="Q9Y6Q6">
    <property type="glycosylation" value="2 sites, 1 N-linked glycan (1 site)"/>
</dbReference>
<dbReference type="iPTMnet" id="Q9Y6Q6"/>
<dbReference type="PhosphoSitePlus" id="Q9Y6Q6"/>
<dbReference type="BioMuta" id="TNFRSF11A"/>
<dbReference type="DMDM" id="19924309"/>
<dbReference type="jPOST" id="Q9Y6Q6"/>
<dbReference type="MassIVE" id="Q9Y6Q6"/>
<dbReference type="PaxDb" id="9606-ENSP00000465500"/>
<dbReference type="PeptideAtlas" id="Q9Y6Q6"/>
<dbReference type="ProteomicsDB" id="86765">
    <molecule id="Q9Y6Q6-1"/>
</dbReference>
<dbReference type="Antibodypedia" id="4165">
    <property type="antibodies" value="801 antibodies from 43 providers"/>
</dbReference>
<dbReference type="DNASU" id="8792"/>
<dbReference type="Ensembl" id="ENST00000269485.11">
    <molecule id="Q9Y6Q6-2"/>
    <property type="protein sequence ID" value="ENSP00000269485.7"/>
    <property type="gene ID" value="ENSG00000141655.18"/>
</dbReference>
<dbReference type="Ensembl" id="ENST00000586569.3">
    <molecule id="Q9Y6Q6-1"/>
    <property type="protein sequence ID" value="ENSP00000465500.1"/>
    <property type="gene ID" value="ENSG00000141655.18"/>
</dbReference>
<dbReference type="GeneID" id="8792"/>
<dbReference type="KEGG" id="hsa:8792"/>
<dbReference type="MANE-Select" id="ENST00000586569.3">
    <property type="protein sequence ID" value="ENSP00000465500.1"/>
    <property type="RefSeq nucleotide sequence ID" value="NM_003839.4"/>
    <property type="RefSeq protein sequence ID" value="NP_003830.1"/>
</dbReference>
<dbReference type="UCSC" id="uc002lin.5">
    <molecule id="Q9Y6Q6-1"/>
    <property type="organism name" value="human"/>
</dbReference>
<dbReference type="AGR" id="HGNC:11908"/>
<dbReference type="CTD" id="8792"/>
<dbReference type="DisGeNET" id="8792"/>
<dbReference type="GeneCards" id="TNFRSF11A"/>
<dbReference type="HGNC" id="HGNC:11908">
    <property type="gene designation" value="TNFRSF11A"/>
</dbReference>
<dbReference type="HPA" id="ENSG00000141655">
    <property type="expression patterns" value="Tissue enhanced (intestine, salivary gland)"/>
</dbReference>
<dbReference type="MalaCards" id="TNFRSF11A"/>
<dbReference type="MIM" id="174810">
    <property type="type" value="phenotype"/>
</dbReference>
<dbReference type="MIM" id="602080">
    <property type="type" value="phenotype"/>
</dbReference>
<dbReference type="MIM" id="603499">
    <property type="type" value="gene"/>
</dbReference>
<dbReference type="MIM" id="612301">
    <property type="type" value="phenotype"/>
</dbReference>
<dbReference type="neXtProt" id="NX_Q9Y6Q6"/>
<dbReference type="OpenTargets" id="ENSG00000141655"/>
<dbReference type="Orphanet" id="391490">
    <property type="disease" value="Adult-onset myasthenia gravis"/>
</dbReference>
<dbReference type="Orphanet" id="1782">
    <property type="disease" value="Dysosteosclerosis"/>
</dbReference>
<dbReference type="Orphanet" id="85195">
    <property type="disease" value="Familial expansile osteolysis"/>
</dbReference>
<dbReference type="Orphanet" id="2801">
    <property type="disease" value="Juvenile Paget disease"/>
</dbReference>
<dbReference type="Orphanet" id="178389">
    <property type="disease" value="Osteopetrosis-hypogammaglobulinemia syndrome"/>
</dbReference>
<dbReference type="PharmGKB" id="PA36601"/>
<dbReference type="VEuPathDB" id="HostDB:ENSG00000141655"/>
<dbReference type="eggNOG" id="ENOG502RWJI">
    <property type="taxonomic scope" value="Eukaryota"/>
</dbReference>
<dbReference type="GeneTree" id="ENSGT00940000161211"/>
<dbReference type="HOGENOM" id="CLU_052667_2_0_1"/>
<dbReference type="InParanoid" id="Q9Y6Q6"/>
<dbReference type="OMA" id="CQRNTIC"/>
<dbReference type="OrthoDB" id="9889060at2759"/>
<dbReference type="PAN-GO" id="Q9Y6Q6">
    <property type="GO annotations" value="11 GO annotations based on evolutionary models"/>
</dbReference>
<dbReference type="PhylomeDB" id="Q9Y6Q6"/>
<dbReference type="PathwayCommons" id="Q9Y6Q6"/>
<dbReference type="Reactome" id="R-HSA-5668541">
    <property type="pathway name" value="TNFR2 non-canonical NF-kB pathway"/>
</dbReference>
<dbReference type="Reactome" id="R-HSA-5676594">
    <property type="pathway name" value="TNF receptor superfamily (TNFSF) members mediating non-canonical NF-kB pathway"/>
</dbReference>
<dbReference type="SignaLink" id="Q9Y6Q6"/>
<dbReference type="SIGNOR" id="Q9Y6Q6"/>
<dbReference type="BioGRID-ORCS" id="8792">
    <property type="hits" value="5 hits in 1150 CRISPR screens"/>
</dbReference>
<dbReference type="ChiTaRS" id="TNFRSF11A">
    <property type="organism name" value="human"/>
</dbReference>
<dbReference type="EvolutionaryTrace" id="Q9Y6Q6"/>
<dbReference type="GeneWiki" id="RANK"/>
<dbReference type="GenomeRNAi" id="8792"/>
<dbReference type="Pharos" id="Q9Y6Q6">
    <property type="development level" value="Tbio"/>
</dbReference>
<dbReference type="PRO" id="PR:Q9Y6Q6"/>
<dbReference type="Proteomes" id="UP000005640">
    <property type="component" value="Chromosome 18"/>
</dbReference>
<dbReference type="RNAct" id="Q9Y6Q6">
    <property type="molecule type" value="protein"/>
</dbReference>
<dbReference type="Bgee" id="ENSG00000141655">
    <property type="expression patterns" value="Expressed in parotid gland and 147 other cell types or tissues"/>
</dbReference>
<dbReference type="ExpressionAtlas" id="Q9Y6Q6">
    <property type="expression patterns" value="baseline and differential"/>
</dbReference>
<dbReference type="GO" id="GO:0005829">
    <property type="term" value="C:cytosol"/>
    <property type="evidence" value="ECO:0000314"/>
    <property type="project" value="HPA"/>
</dbReference>
<dbReference type="GO" id="GO:0009897">
    <property type="term" value="C:external side of plasma membrane"/>
    <property type="evidence" value="ECO:0000314"/>
    <property type="project" value="BHF-UCL"/>
</dbReference>
<dbReference type="GO" id="GO:0045121">
    <property type="term" value="C:membrane raft"/>
    <property type="evidence" value="ECO:0000250"/>
    <property type="project" value="UniProtKB"/>
</dbReference>
<dbReference type="GO" id="GO:0005886">
    <property type="term" value="C:plasma membrane"/>
    <property type="evidence" value="ECO:0000314"/>
    <property type="project" value="HPA"/>
</dbReference>
<dbReference type="GO" id="GO:0019955">
    <property type="term" value="F:cytokine binding"/>
    <property type="evidence" value="ECO:0000353"/>
    <property type="project" value="BHF-UCL"/>
</dbReference>
<dbReference type="GO" id="GO:0046872">
    <property type="term" value="F:metal ion binding"/>
    <property type="evidence" value="ECO:0007669"/>
    <property type="project" value="UniProtKB-KW"/>
</dbReference>
<dbReference type="GO" id="GO:0038023">
    <property type="term" value="F:signaling receptor activity"/>
    <property type="evidence" value="ECO:0000304"/>
    <property type="project" value="ProtInc"/>
</dbReference>
<dbReference type="GO" id="GO:0004888">
    <property type="term" value="F:transmembrane signaling receptor activity"/>
    <property type="evidence" value="ECO:0000314"/>
    <property type="project" value="BHF-UCL"/>
</dbReference>
<dbReference type="GO" id="GO:0005031">
    <property type="term" value="F:tumor necrosis factor receptor activity"/>
    <property type="evidence" value="ECO:0000250"/>
    <property type="project" value="BHF-UCL"/>
</dbReference>
<dbReference type="GO" id="GO:0002250">
    <property type="term" value="P:adaptive immune response"/>
    <property type="evidence" value="ECO:0000315"/>
    <property type="project" value="BHF-UCL"/>
</dbReference>
<dbReference type="GO" id="GO:0007267">
    <property type="term" value="P:cell-cell signaling"/>
    <property type="evidence" value="ECO:0000304"/>
    <property type="project" value="ProtInc"/>
</dbReference>
<dbReference type="GO" id="GO:0034224">
    <property type="term" value="P:cellular response to zinc ion starvation"/>
    <property type="evidence" value="ECO:0007669"/>
    <property type="project" value="Ensembl"/>
</dbReference>
<dbReference type="GO" id="GO:0060086">
    <property type="term" value="P:circadian temperature homeostasis"/>
    <property type="evidence" value="ECO:0000250"/>
    <property type="project" value="BHF-UCL"/>
</dbReference>
<dbReference type="GO" id="GO:0048535">
    <property type="term" value="P:lymph node development"/>
    <property type="evidence" value="ECO:0000318"/>
    <property type="project" value="GO_Central"/>
</dbReference>
<dbReference type="GO" id="GO:0060749">
    <property type="term" value="P:mammary gland alveolus development"/>
    <property type="evidence" value="ECO:0007669"/>
    <property type="project" value="Ensembl"/>
</dbReference>
<dbReference type="GO" id="GO:0002548">
    <property type="term" value="P:monocyte chemotaxis"/>
    <property type="evidence" value="ECO:0000303"/>
    <property type="project" value="BHF-UCL"/>
</dbReference>
<dbReference type="GO" id="GO:0072674">
    <property type="term" value="P:multinuclear osteoclast differentiation"/>
    <property type="evidence" value="ECO:0000318"/>
    <property type="project" value="GO_Central"/>
</dbReference>
<dbReference type="GO" id="GO:0001503">
    <property type="term" value="P:ossification"/>
    <property type="evidence" value="ECO:0000318"/>
    <property type="project" value="GO_Central"/>
</dbReference>
<dbReference type="GO" id="GO:0030316">
    <property type="term" value="P:osteoclast differentiation"/>
    <property type="evidence" value="ECO:0000315"/>
    <property type="project" value="BHF-UCL"/>
</dbReference>
<dbReference type="GO" id="GO:0045780">
    <property type="term" value="P:positive regulation of bone resorption"/>
    <property type="evidence" value="ECO:0000318"/>
    <property type="project" value="GO_Central"/>
</dbReference>
<dbReference type="GO" id="GO:0043123">
    <property type="term" value="P:positive regulation of canonical NF-kappaB signal transduction"/>
    <property type="evidence" value="ECO:0000315"/>
    <property type="project" value="BHF-UCL"/>
</dbReference>
<dbReference type="GO" id="GO:0008284">
    <property type="term" value="P:positive regulation of cell population proliferation"/>
    <property type="evidence" value="ECO:0000304"/>
    <property type="project" value="ProtInc"/>
</dbReference>
<dbReference type="GO" id="GO:0070374">
    <property type="term" value="P:positive regulation of ERK1 and ERK2 cascade"/>
    <property type="evidence" value="ECO:0000315"/>
    <property type="project" value="BHF-UCL"/>
</dbReference>
<dbReference type="GO" id="GO:0071812">
    <property type="term" value="P:positive regulation of fever generation by positive regulation of prostaglandin secretion"/>
    <property type="evidence" value="ECO:0000250"/>
    <property type="project" value="BHF-UCL"/>
</dbReference>
<dbReference type="GO" id="GO:0046330">
    <property type="term" value="P:positive regulation of JNK cascade"/>
    <property type="evidence" value="ECO:0000315"/>
    <property type="project" value="BHF-UCL"/>
</dbReference>
<dbReference type="GO" id="GO:1901224">
    <property type="term" value="P:positive regulation of non-canonical NF-kappaB signal transduction"/>
    <property type="evidence" value="ECO:0000314"/>
    <property type="project" value="BHF-UCL"/>
</dbReference>
<dbReference type="GO" id="GO:0045672">
    <property type="term" value="P:positive regulation of osteoclast differentiation"/>
    <property type="evidence" value="ECO:0000250"/>
    <property type="project" value="UniProtKB"/>
</dbReference>
<dbReference type="GO" id="GO:0045471">
    <property type="term" value="P:response to ethanol"/>
    <property type="evidence" value="ECO:0007669"/>
    <property type="project" value="Ensembl"/>
</dbReference>
<dbReference type="GO" id="GO:0032868">
    <property type="term" value="P:response to insulin"/>
    <property type="evidence" value="ECO:0007669"/>
    <property type="project" value="Ensembl"/>
</dbReference>
<dbReference type="GO" id="GO:0070555">
    <property type="term" value="P:response to interleukin-1"/>
    <property type="evidence" value="ECO:0000250"/>
    <property type="project" value="BHF-UCL"/>
</dbReference>
<dbReference type="GO" id="GO:0032496">
    <property type="term" value="P:response to lipopolysaccharide"/>
    <property type="evidence" value="ECO:0000250"/>
    <property type="project" value="BHF-UCL"/>
</dbReference>
<dbReference type="GO" id="GO:0009612">
    <property type="term" value="P:response to mechanical stimulus"/>
    <property type="evidence" value="ECO:0007669"/>
    <property type="project" value="Ensembl"/>
</dbReference>
<dbReference type="GO" id="GO:0034612">
    <property type="term" value="P:response to tumor necrosis factor"/>
    <property type="evidence" value="ECO:0000250"/>
    <property type="project" value="BHF-UCL"/>
</dbReference>
<dbReference type="GO" id="GO:0007165">
    <property type="term" value="P:signal transduction"/>
    <property type="evidence" value="ECO:0000304"/>
    <property type="project" value="ProtInc"/>
</dbReference>
<dbReference type="GO" id="GO:0033209">
    <property type="term" value="P:tumor necrosis factor-mediated signaling pathway"/>
    <property type="evidence" value="ECO:0000314"/>
    <property type="project" value="BHF-UCL"/>
</dbReference>
<dbReference type="CDD" id="cd13411">
    <property type="entry name" value="TNFRSF11A"/>
    <property type="match status" value="1"/>
</dbReference>
<dbReference type="FunFam" id="2.10.50.10:FF:000015">
    <property type="entry name" value="TNF receptor superfamily member 11a"/>
    <property type="match status" value="1"/>
</dbReference>
<dbReference type="FunFam" id="2.10.50.10:FF:000019">
    <property type="entry name" value="Tumor necrosis factor receptor superfamily member 11A"/>
    <property type="match status" value="1"/>
</dbReference>
<dbReference type="Gene3D" id="2.10.50.10">
    <property type="entry name" value="Tumor Necrosis Factor Receptor, subunit A, domain 2"/>
    <property type="match status" value="2"/>
</dbReference>
<dbReference type="InterPro" id="IPR041648">
    <property type="entry name" value="RANK_CRD_2"/>
</dbReference>
<dbReference type="InterPro" id="IPR001368">
    <property type="entry name" value="TNFR/NGFR_Cys_rich_reg"/>
</dbReference>
<dbReference type="InterPro" id="IPR022323">
    <property type="entry name" value="TNFR_11"/>
</dbReference>
<dbReference type="InterPro" id="IPR022361">
    <property type="entry name" value="TNFR_11A"/>
</dbReference>
<dbReference type="InterPro" id="IPR053075">
    <property type="entry name" value="TNFRSF11A"/>
</dbReference>
<dbReference type="InterPro" id="IPR034040">
    <property type="entry name" value="TNFRSF11A_N"/>
</dbReference>
<dbReference type="PANTHER" id="PTHR47134">
    <property type="entry name" value="TUMOR NECROSIS FACTOR RECEPTOR SUPERFAMILY MEMBER 11A"/>
    <property type="match status" value="1"/>
</dbReference>
<dbReference type="PANTHER" id="PTHR47134:SF1">
    <property type="entry name" value="TUMOR NECROSIS FACTOR RECEPTOR SUPERFAMILY MEMBER 11A"/>
    <property type="match status" value="1"/>
</dbReference>
<dbReference type="Pfam" id="PF18278">
    <property type="entry name" value="RANK_CRD_2"/>
    <property type="match status" value="1"/>
</dbReference>
<dbReference type="Pfam" id="PF00020">
    <property type="entry name" value="TNFR_c6"/>
    <property type="match status" value="1"/>
</dbReference>
<dbReference type="PRINTS" id="PR01961">
    <property type="entry name" value="TNFACTORR11"/>
</dbReference>
<dbReference type="PRINTS" id="PR01974">
    <property type="entry name" value="TNFACTORR11A"/>
</dbReference>
<dbReference type="SMART" id="SM00208">
    <property type="entry name" value="TNFR"/>
    <property type="match status" value="4"/>
</dbReference>
<dbReference type="SUPFAM" id="SSF57586">
    <property type="entry name" value="TNF receptor-like"/>
    <property type="match status" value="3"/>
</dbReference>
<dbReference type="PROSITE" id="PS00652">
    <property type="entry name" value="TNFR_NGFR_1"/>
    <property type="match status" value="1"/>
</dbReference>
<dbReference type="PROSITE" id="PS50050">
    <property type="entry name" value="TNFR_NGFR_2"/>
    <property type="match status" value="1"/>
</dbReference>
<keyword id="KW-0002">3D-structure</keyword>
<keyword id="KW-0025">Alternative splicing</keyword>
<keyword id="KW-1003">Cell membrane</keyword>
<keyword id="KW-0209">Deafness</keyword>
<keyword id="KW-0225">Disease variant</keyword>
<keyword id="KW-1015">Disulfide bond</keyword>
<keyword id="KW-0325">Glycoprotein</keyword>
<keyword id="KW-0472">Membrane</keyword>
<keyword id="KW-0479">Metal-binding</keyword>
<keyword id="KW-0987">Osteopetrosis</keyword>
<keyword id="KW-0597">Phosphoprotein</keyword>
<keyword id="KW-1267">Proteomics identification</keyword>
<keyword id="KW-0675">Receptor</keyword>
<keyword id="KW-1185">Reference proteome</keyword>
<keyword id="KW-0677">Repeat</keyword>
<keyword id="KW-0732">Signal</keyword>
<keyword id="KW-0915">Sodium</keyword>
<keyword id="KW-0812">Transmembrane</keyword>
<keyword id="KW-1133">Transmembrane helix</keyword>
<sequence length="616" mass="66034">MAPRARRRRPLFALLLLCALLARLQVALQIAPPCTSEKHYEHLGRCCNKCEPGKYMSSKCTTTSDSVCLPCGPDEYLDSWNEEDKCLLHKVCDTGKALVAVVAGNSTTPRRCACTAGYHWSQDCECCRRNTECAPGLGAQHPLQLNKDTVCKPCLAGYFSDAFSSTDKCRPWTNCTFLGKRVEHHGTEKSDAVCSSSLPARKPPNEPHVYLPGLIILLLFASVALVAAIIFGVCYRKKGKALTANLWHWINEACGRLSGDKESSGDSCVSTHTANFGQQGACEGVLLLTLEEKTFPEDMCYPDQGGVCQGTCVGGGPYAQGEDARMLSLVSKTEIEEDSFRQMPTEDEYMDRPSQPTDQLLFLTEPGSKSTPPFSEPLEVGENDSLSQCFTGTQSTVGSESCNCTEPLCRTDWTPMSSENYLQKEVDSGHCPHWAASPSPNWADVCTGCRNPPGEDCEPLVGSPKRGPLPQCAYGMGLPPEEEASRTEARDQPEDGADGRLPSSARAGAGSGSSPGGQSPASGNVTGNSNSTFISSGQVMNFKGDIIVVYVSQTSQEGAAAAAEPMGRPVQEETLARRDSFAGNGPRFPDPCGGPEGLREPEKASRPVQEQGGAKA</sequence>
<proteinExistence type="evidence at protein level"/>